<keyword id="KW-0050">Antiport</keyword>
<keyword id="KW-1003">Cell membrane</keyword>
<keyword id="KW-0966">Cell projection</keyword>
<keyword id="KW-0325">Glycoprotein</keyword>
<keyword id="KW-0406">Ion transport</keyword>
<keyword id="KW-0472">Membrane</keyword>
<keyword id="KW-0597">Phosphoprotein</keyword>
<keyword id="KW-1185">Reference proteome</keyword>
<keyword id="KW-0915">Sodium</keyword>
<keyword id="KW-0739">Sodium transport</keyword>
<keyword id="KW-0769">Symport</keyword>
<keyword id="KW-0770">Synapse</keyword>
<keyword id="KW-0812">Transmembrane</keyword>
<keyword id="KW-1133">Transmembrane helix</keyword>
<keyword id="KW-0813">Transport</keyword>
<organism>
    <name type="scientific">Bos taurus</name>
    <name type="common">Bovine</name>
    <dbReference type="NCBI Taxonomy" id="9913"/>
    <lineage>
        <taxon>Eukaryota</taxon>
        <taxon>Metazoa</taxon>
        <taxon>Chordata</taxon>
        <taxon>Craniata</taxon>
        <taxon>Vertebrata</taxon>
        <taxon>Euteleostomi</taxon>
        <taxon>Mammalia</taxon>
        <taxon>Eutheria</taxon>
        <taxon>Laurasiatheria</taxon>
        <taxon>Artiodactyla</taxon>
        <taxon>Ruminantia</taxon>
        <taxon>Pecora</taxon>
        <taxon>Bovidae</taxon>
        <taxon>Bovinae</taxon>
        <taxon>Bos</taxon>
    </lineage>
</organism>
<name>S4A10_BOVIN</name>
<reference key="1">
    <citation type="submission" date="2005-11" db="EMBL/GenBank/DDBJ databases">
        <authorList>
            <consortium name="NIH - Mammalian Gene Collection (MGC) project"/>
        </authorList>
    </citation>
    <scope>NUCLEOTIDE SEQUENCE [LARGE SCALE MRNA]</scope>
    <source>
        <strain>Hereford</strain>
        <tissue>Hypothalamus</tissue>
    </source>
</reference>
<gene>
    <name evidence="2" type="primary">SLC4A10</name>
</gene>
<evidence type="ECO:0000250" key="1">
    <source>
        <dbReference type="UniProtKB" id="Q5DTL9"/>
    </source>
</evidence>
<evidence type="ECO:0000250" key="2">
    <source>
        <dbReference type="UniProtKB" id="Q6U841"/>
    </source>
</evidence>
<evidence type="ECO:0000250" key="3">
    <source>
        <dbReference type="UniProtKB" id="Q80ZA5"/>
    </source>
</evidence>
<evidence type="ECO:0000255" key="4"/>
<evidence type="ECO:0000256" key="5">
    <source>
        <dbReference type="SAM" id="MobiDB-lite"/>
    </source>
</evidence>
<evidence type="ECO:0000305" key="6"/>
<protein>
    <recommendedName>
        <fullName evidence="2">Sodium-driven chloride bicarbonate exchanger</fullName>
    </recommendedName>
    <alternativeName>
        <fullName evidence="2">Solute carrier family 4 member 10</fullName>
    </alternativeName>
</protein>
<feature type="chain" id="PRO_0000245239" description="Sodium-driven chloride bicarbonate exchanger">
    <location>
        <begin position="1"/>
        <end position="1117"/>
    </location>
</feature>
<feature type="topological domain" description="Cytoplasmic" evidence="4">
    <location>
        <begin position="1"/>
        <end position="508"/>
    </location>
</feature>
<feature type="transmembrane region" description="Helical" evidence="4">
    <location>
        <begin position="509"/>
        <end position="529"/>
    </location>
</feature>
<feature type="topological domain" description="Extracellular" evidence="4">
    <location>
        <begin position="530"/>
        <end position="537"/>
    </location>
</feature>
<feature type="transmembrane region" description="Helical" evidence="4">
    <location>
        <begin position="538"/>
        <end position="558"/>
    </location>
</feature>
<feature type="topological domain" description="Cytoplasmic" evidence="4">
    <location>
        <begin position="559"/>
        <end position="561"/>
    </location>
</feature>
<feature type="transmembrane region" description="Helical" evidence="4">
    <location>
        <begin position="562"/>
        <end position="582"/>
    </location>
</feature>
<feature type="topological domain" description="Extracellular" evidence="4">
    <location>
        <begin position="583"/>
        <end position="595"/>
    </location>
</feature>
<feature type="transmembrane region" description="Helical" evidence="4">
    <location>
        <begin position="596"/>
        <end position="616"/>
    </location>
</feature>
<feature type="topological domain" description="Cytoplasmic" evidence="4">
    <location>
        <begin position="617"/>
        <end position="625"/>
    </location>
</feature>
<feature type="transmembrane region" description="Helical" evidence="4">
    <location>
        <begin position="626"/>
        <end position="646"/>
    </location>
</feature>
<feature type="topological domain" description="Extracellular" evidence="4">
    <location>
        <begin position="647"/>
        <end position="719"/>
    </location>
</feature>
<feature type="transmembrane region" description="Helical" evidence="4">
    <location>
        <begin position="720"/>
        <end position="740"/>
    </location>
</feature>
<feature type="topological domain" description="Cytoplasmic" evidence="4">
    <location>
        <begin position="741"/>
        <end position="761"/>
    </location>
</feature>
<feature type="transmembrane region" description="Helical" evidence="4">
    <location>
        <begin position="762"/>
        <end position="782"/>
    </location>
</feature>
<feature type="topological domain" description="Extracellular" evidence="4">
    <location>
        <begin position="783"/>
        <end position="808"/>
    </location>
</feature>
<feature type="transmembrane region" description="Helical" evidence="4">
    <location>
        <begin position="809"/>
        <end position="829"/>
    </location>
</feature>
<feature type="topological domain" description="Cytoplasmic" evidence="4">
    <location>
        <begin position="830"/>
        <end position="854"/>
    </location>
</feature>
<feature type="transmembrane region" description="Helical" evidence="4">
    <location>
        <begin position="855"/>
        <end position="875"/>
    </location>
</feature>
<feature type="topological domain" description="Extracellular" evidence="4">
    <location>
        <begin position="876"/>
        <end position="911"/>
    </location>
</feature>
<feature type="transmembrane region" description="Helical" evidence="4">
    <location>
        <begin position="912"/>
        <end position="932"/>
    </location>
</feature>
<feature type="topological domain" description="Cytoplasmic" evidence="4">
    <location>
        <begin position="933"/>
        <end position="934"/>
    </location>
</feature>
<feature type="transmembrane region" description="Helical" evidence="4">
    <location>
        <begin position="935"/>
        <end position="955"/>
    </location>
</feature>
<feature type="topological domain" description="Extracellular" evidence="4">
    <location>
        <begin position="956"/>
        <end position="997"/>
    </location>
</feature>
<feature type="transmembrane region" description="Helical" evidence="4">
    <location>
        <begin position="998"/>
        <end position="1018"/>
    </location>
</feature>
<feature type="topological domain" description="Cytoplasmic" evidence="4">
    <location>
        <begin position="1019"/>
        <end position="1117"/>
    </location>
</feature>
<feature type="region of interest" description="Disordered" evidence="5">
    <location>
        <begin position="1"/>
        <end position="26"/>
    </location>
</feature>
<feature type="region of interest" description="Disordered" evidence="5">
    <location>
        <begin position="57"/>
        <end position="94"/>
    </location>
</feature>
<feature type="region of interest" description="Disordered" evidence="5">
    <location>
        <begin position="244"/>
        <end position="312"/>
    </location>
</feature>
<feature type="region of interest" description="Disordered" evidence="5">
    <location>
        <begin position="456"/>
        <end position="475"/>
    </location>
</feature>
<feature type="compositionally biased region" description="Polar residues" evidence="5">
    <location>
        <begin position="1"/>
        <end position="14"/>
    </location>
</feature>
<feature type="compositionally biased region" description="Basic and acidic residues" evidence="5">
    <location>
        <begin position="15"/>
        <end position="26"/>
    </location>
</feature>
<feature type="compositionally biased region" description="Basic residues" evidence="5">
    <location>
        <begin position="58"/>
        <end position="75"/>
    </location>
</feature>
<feature type="compositionally biased region" description="Basic and acidic residues" evidence="5">
    <location>
        <begin position="76"/>
        <end position="89"/>
    </location>
</feature>
<feature type="compositionally biased region" description="Polar residues" evidence="5">
    <location>
        <begin position="247"/>
        <end position="263"/>
    </location>
</feature>
<feature type="modified residue" description="Phosphoserine" evidence="1">
    <location>
        <position position="88"/>
    </location>
</feature>
<feature type="modified residue" description="Phosphothreonine" evidence="1">
    <location>
        <position position="93"/>
    </location>
</feature>
<feature type="modified residue" description="Phosphoserine" evidence="1">
    <location>
        <position position="275"/>
    </location>
</feature>
<feature type="modified residue" description="Phosphoserine" evidence="1">
    <location>
        <position position="1056"/>
    </location>
</feature>
<feature type="modified residue" description="Phosphoserine" evidence="1">
    <location>
        <position position="1084"/>
    </location>
</feature>
<feature type="glycosylation site" description="N-linked (GlcNAc...) asparagine" evidence="4">
    <location>
        <position position="673"/>
    </location>
</feature>
<feature type="glycosylation site" description="N-linked (GlcNAc...) asparagine" evidence="4">
    <location>
        <position position="676"/>
    </location>
</feature>
<feature type="glycosylation site" description="N-linked (GlcNAc...) asparagine" evidence="4">
    <location>
        <position position="686"/>
    </location>
</feature>
<feature type="glycosylation site" description="N-linked (GlcNAc...) asparagine" evidence="4">
    <location>
        <position position="696"/>
    </location>
</feature>
<proteinExistence type="evidence at transcript level"/>
<accession>Q32LP4</accession>
<sequence length="1117" mass="125776">MQSGTCESFQSLSHQRNDEEAVVDRGGTRSILKTHFEKEDLEGHRTLFIGVHVPLGGRKSHRRHRHRGHKHRKRDRERDSGLEDGRESPSFDTPSQRVQFILGTEDDDEEHIPHDLFTELDEICWREGEDAEWRETARWLKFEEDVEDGGERWSKPYVATLSLHSLFELRSCILNGTVLLDMHANTLEEIADMVLDQQVSSGQLNEDVRHRVHEALMKQHHHQNQKKLTNRIPIVRSFADIGKKQSEPNSMDKNAGQVVSPQSAPACVENKNDVSRENSTVDFSKGLGGQQKGHTSPCGMKQRHEKGPPHQQDREVDLHFMKKIPPGAEASNILVGELEFLDRTVVAFVRLSPAVLLQGLAEVPIPTRFLFILLGPLGKGQQYHEIGRSIATLMTDEVFHDVAYKAKDRNDLVSGIDEFLDQVTVLPPGEWDPSIRIEPPKNVPSQEKRKIPAVPNGTAAHGEAEPHGGHSGPELQRTGRLFGGLILDIKRKAPYFWSDFTDALSLQCLASFLFLYCACMSPVITFGGLLGEATEGRISAIESLFGASMTGIAYSLFGGQPLTILGSTGPVLVFEKILFKFCKEYGLSYLSLRASIGLWTATLCIILVATDASSLVCYITRFTEEAFASLICIIFIYEALEKLFELSEAYPINMHNDLELLTQYSCNCVEPHNPSNNTLKEWRESNISASDIIWENLTVSECTSLHGEYVGRACGHEHPYVPDVLFWSVILFFSTVTLSATLKQFKTSRYFPTKVRSIVSDFAVFLTILCMVLIDYAIGIPSPKLQVPSVFKPTRDDRGWFVTPLGPNPWWTVIAAIIPALLCTILIFMDQQITAVIINRKEHKLKKGCGYHLDLLMVAVMLGVCSIMGLPWFVAATVLSITHVNSLKLESECSAPGEQPKFLGIREQRVTGLMIFILMGSSVFMTSILKFIPMPVLYGVFLYMGASSLKGIQFFDRIKLFWMPAKHQPDFIYLRHVPLRKVHLFTVIQMSCLGLLWIIKVSRAAIVFPMMVLALVFVRKLMDFLFTKRELSWLDDLMPESKKKKLEDAEKEEEQSMLAMEDEGTVQLPLEGHYRDDPSVINISDEMSKTALWRNLLITADNSKDKESSFPSKSSPS</sequence>
<dbReference type="EMBL" id="BC109483">
    <property type="protein sequence ID" value="AAI09484.1"/>
    <property type="molecule type" value="mRNA"/>
</dbReference>
<dbReference type="RefSeq" id="NP_001033217.1">
    <property type="nucleotide sequence ID" value="NM_001038128.2"/>
</dbReference>
<dbReference type="SMR" id="Q32LP4"/>
<dbReference type="FunCoup" id="Q32LP4">
    <property type="interactions" value="1951"/>
</dbReference>
<dbReference type="STRING" id="9913.ENSBTAP00000064195"/>
<dbReference type="GlyCosmos" id="Q32LP4">
    <property type="glycosylation" value="4 sites, No reported glycans"/>
</dbReference>
<dbReference type="GlyGen" id="Q32LP4">
    <property type="glycosylation" value="4 sites"/>
</dbReference>
<dbReference type="PaxDb" id="9913-ENSBTAP00000020366"/>
<dbReference type="Ensembl" id="ENSBTAT00000069330.1">
    <property type="protein sequence ID" value="ENSBTAP00000064195.1"/>
    <property type="gene ID" value="ENSBTAG00000015317.7"/>
</dbReference>
<dbReference type="GeneID" id="517077"/>
<dbReference type="KEGG" id="bta:517077"/>
<dbReference type="CTD" id="57282"/>
<dbReference type="VEuPathDB" id="HostDB:ENSBTAG00000015317"/>
<dbReference type="VGNC" id="VGNC:34890">
    <property type="gene designation" value="SLC4A10"/>
</dbReference>
<dbReference type="eggNOG" id="KOG1172">
    <property type="taxonomic scope" value="Eukaryota"/>
</dbReference>
<dbReference type="GeneTree" id="ENSGT00940000156972"/>
<dbReference type="InParanoid" id="Q32LP4"/>
<dbReference type="OMA" id="EDAEKEX"/>
<dbReference type="OrthoDB" id="1735926at2759"/>
<dbReference type="Reactome" id="R-BTA-425381">
    <property type="pathway name" value="Bicarbonate transporters"/>
</dbReference>
<dbReference type="Proteomes" id="UP000009136">
    <property type="component" value="Chromosome 2"/>
</dbReference>
<dbReference type="Bgee" id="ENSBTAG00000015317">
    <property type="expression patterns" value="Expressed in occipital lobe and 27 other cell types or tissues"/>
</dbReference>
<dbReference type="GO" id="GO:0016324">
    <property type="term" value="C:apical plasma membrane"/>
    <property type="evidence" value="ECO:0000250"/>
    <property type="project" value="UniProtKB"/>
</dbReference>
<dbReference type="GO" id="GO:0043679">
    <property type="term" value="C:axon terminus"/>
    <property type="evidence" value="ECO:0000250"/>
    <property type="project" value="UniProtKB"/>
</dbReference>
<dbReference type="GO" id="GO:0016323">
    <property type="term" value="C:basolateral plasma membrane"/>
    <property type="evidence" value="ECO:0000250"/>
    <property type="project" value="UniProtKB"/>
</dbReference>
<dbReference type="GO" id="GO:0030425">
    <property type="term" value="C:dendrite"/>
    <property type="evidence" value="ECO:0000250"/>
    <property type="project" value="UniProtKB"/>
</dbReference>
<dbReference type="GO" id="GO:0098982">
    <property type="term" value="C:GABA-ergic synapse"/>
    <property type="evidence" value="ECO:0000250"/>
    <property type="project" value="UniProtKB"/>
</dbReference>
<dbReference type="GO" id="GO:0043025">
    <property type="term" value="C:neuronal cell body"/>
    <property type="evidence" value="ECO:0000250"/>
    <property type="project" value="UniProtKB"/>
</dbReference>
<dbReference type="GO" id="GO:0043204">
    <property type="term" value="C:perikaryon"/>
    <property type="evidence" value="ECO:0007669"/>
    <property type="project" value="UniProtKB-SubCell"/>
</dbReference>
<dbReference type="GO" id="GO:0005886">
    <property type="term" value="C:plasma membrane"/>
    <property type="evidence" value="ECO:0000318"/>
    <property type="project" value="GO_Central"/>
</dbReference>
<dbReference type="GO" id="GO:0098794">
    <property type="term" value="C:postsynapse"/>
    <property type="evidence" value="ECO:0007669"/>
    <property type="project" value="UniProtKB-SubCell"/>
</dbReference>
<dbReference type="GO" id="GO:0036477">
    <property type="term" value="C:somatodendritic compartment"/>
    <property type="evidence" value="ECO:0000250"/>
    <property type="project" value="UniProtKB"/>
</dbReference>
<dbReference type="GO" id="GO:0045202">
    <property type="term" value="C:synapse"/>
    <property type="evidence" value="ECO:0000250"/>
    <property type="project" value="UniProtKB"/>
</dbReference>
<dbReference type="GO" id="GO:0008509">
    <property type="term" value="F:monoatomic anion transmembrane transporter activity"/>
    <property type="evidence" value="ECO:0007669"/>
    <property type="project" value="InterPro"/>
</dbReference>
<dbReference type="GO" id="GO:0008510">
    <property type="term" value="F:sodium:bicarbonate symporter activity"/>
    <property type="evidence" value="ECO:0000250"/>
    <property type="project" value="UniProtKB"/>
</dbReference>
<dbReference type="GO" id="GO:0005452">
    <property type="term" value="F:solute:inorganic anion antiporter activity"/>
    <property type="evidence" value="ECO:0007669"/>
    <property type="project" value="InterPro"/>
</dbReference>
<dbReference type="GO" id="GO:0015701">
    <property type="term" value="P:bicarbonate transport"/>
    <property type="evidence" value="ECO:0000318"/>
    <property type="project" value="GO_Central"/>
</dbReference>
<dbReference type="GO" id="GO:0051453">
    <property type="term" value="P:regulation of intracellular pH"/>
    <property type="evidence" value="ECO:0000318"/>
    <property type="project" value="GO_Central"/>
</dbReference>
<dbReference type="GO" id="GO:0048172">
    <property type="term" value="P:regulation of short-term neuronal synaptic plasticity"/>
    <property type="evidence" value="ECO:0000250"/>
    <property type="project" value="UniProtKB"/>
</dbReference>
<dbReference type="GO" id="GO:0055085">
    <property type="term" value="P:transmembrane transport"/>
    <property type="evidence" value="ECO:0000318"/>
    <property type="project" value="GO_Central"/>
</dbReference>
<dbReference type="GO" id="GO:0007601">
    <property type="term" value="P:visual perception"/>
    <property type="evidence" value="ECO:0000250"/>
    <property type="project" value="UniProtKB"/>
</dbReference>
<dbReference type="FunFam" id="1.10.287.570:FF:000001">
    <property type="entry name" value="Anion exchange protein"/>
    <property type="match status" value="1"/>
</dbReference>
<dbReference type="Gene3D" id="1.10.287.570">
    <property type="entry name" value="Helical hairpin bin"/>
    <property type="match status" value="1"/>
</dbReference>
<dbReference type="Gene3D" id="3.40.930.10">
    <property type="entry name" value="Mannitol-specific EII, Chain A"/>
    <property type="match status" value="1"/>
</dbReference>
<dbReference type="InterPro" id="IPR013769">
    <property type="entry name" value="Band3_cytoplasmic_dom"/>
</dbReference>
<dbReference type="InterPro" id="IPR011531">
    <property type="entry name" value="HCO3_transpt-like_TM_dom"/>
</dbReference>
<dbReference type="InterPro" id="IPR003020">
    <property type="entry name" value="HCO3_transpt_euk"/>
</dbReference>
<dbReference type="InterPro" id="IPR003024">
    <property type="entry name" value="Na/HCO3_transpt"/>
</dbReference>
<dbReference type="InterPro" id="IPR016152">
    <property type="entry name" value="PTrfase/Anion_transptr"/>
</dbReference>
<dbReference type="NCBIfam" id="TIGR00834">
    <property type="entry name" value="ae"/>
    <property type="match status" value="1"/>
</dbReference>
<dbReference type="PANTHER" id="PTHR11453">
    <property type="entry name" value="ANION EXCHANGE PROTEIN"/>
    <property type="match status" value="1"/>
</dbReference>
<dbReference type="PANTHER" id="PTHR11453:SF32">
    <property type="entry name" value="SODIUM-DRIVEN CHLORIDE BICARBONATE EXCHANGER"/>
    <property type="match status" value="1"/>
</dbReference>
<dbReference type="Pfam" id="PF07565">
    <property type="entry name" value="Band_3_cyto"/>
    <property type="match status" value="1"/>
</dbReference>
<dbReference type="Pfam" id="PF00955">
    <property type="entry name" value="HCO3_cotransp"/>
    <property type="match status" value="1"/>
</dbReference>
<dbReference type="PRINTS" id="PR01231">
    <property type="entry name" value="HCO3TRNSPORT"/>
</dbReference>
<dbReference type="PRINTS" id="PR01232">
    <property type="entry name" value="NAHCO3TRSPRT"/>
</dbReference>
<dbReference type="SUPFAM" id="SSF55804">
    <property type="entry name" value="Phoshotransferase/anion transport protein"/>
    <property type="match status" value="1"/>
</dbReference>
<comment type="function">
    <text evidence="1 2 3">Sodium/bicarbonate cotransporter which plays an important role in regulating intracellular pH (By similarity). Has been shown to act as a sodium/bicarbonate cotransporter in exchange for intracellular chloride (By similarity). Has also been shown to act as a sodium/biocarbonate cotransporter which does not couple net influx of bicarbonate to net efflux of chloride, with the observed chloride efflux being due to chloride self-exchange (By similarity). Controls neuronal pH and may contribute to the secretion of cerebrospinal fluid (By similarity). Acting on presynaptic intracellular pH, it promotes GABA release, reduces the excitability of CA1 pyramidal neurons, and modulates short-term synaptic plasticity (By similarity). Required in retinal cells to maintain normal pH which is necessary for normal vision (By similarity). In the kidney, likely to mediate bicarbonate reclamation in the apical membrane of the proximal tubules (By similarity).</text>
</comment>
<comment type="subcellular location">
    <subcellularLocation>
        <location evidence="1">Basolateral cell membrane</location>
        <topology evidence="4">Multi-pass membrane protein</topology>
    </subcellularLocation>
    <subcellularLocation>
        <location evidence="3">Apical cell membrane</location>
        <topology evidence="4">Multi-pass membrane protein</topology>
    </subcellularLocation>
    <subcellularLocation>
        <location evidence="1">Cell projection</location>
        <location evidence="1">Dendrite</location>
    </subcellularLocation>
    <subcellularLocation>
        <location evidence="1">Cell projection</location>
        <location evidence="1">Axon</location>
    </subcellularLocation>
    <subcellularLocation>
        <location evidence="1">Perikaryon</location>
    </subcellularLocation>
    <subcellularLocation>
        <location evidence="1">Presynapse</location>
    </subcellularLocation>
    <subcellularLocation>
        <location evidence="1">Postsynapse</location>
    </subcellularLocation>
    <text evidence="1">Detected in dendrites and axon terminals of retinal OFF bipolar cells and in axon terminals of ON bipolar cells (By similarity). In amacrine cells, located in the perikaryon (By similarity). Also detected in basal and apical dendrites of hippocampal pyramidal cells (By similarity). Localized to GABAergic inhibitory presynapses (By similarity).</text>
</comment>
<comment type="domain">
    <text evidence="3">The N-terminal cytoplasmic domain is likely to have a high level of intrinsic disorder.</text>
</comment>
<comment type="PTM">
    <text evidence="1">N-glycosylated.</text>
</comment>
<comment type="similarity">
    <text evidence="6">Belongs to the anion exchanger (TC 2.A.31) family.</text>
</comment>
<comment type="caution">
    <text evidence="1 2">Has been shown to act as a sodium/bicarbonate cotransporter in exchange for intracellular chloride (By similarity). Has also been shown to act as a sodium/biocarbonate cotransporter which is not responsible for net efflux of chloride, with the observed chloride efflux being due to chloride self-exchange (By similarity).</text>
</comment>